<keyword id="KW-0521">NADP</keyword>
<keyword id="KW-1185">Reference proteome</keyword>
<reference key="1">
    <citation type="journal article" date="1997" name="Nature">
        <title>The nucleotide sequence of Saccharomyces cerevisiae chromosome XVI.</title>
        <authorList>
            <person name="Bussey H."/>
            <person name="Storms R.K."/>
            <person name="Ahmed A."/>
            <person name="Albermann K."/>
            <person name="Allen E."/>
            <person name="Ansorge W."/>
            <person name="Araujo R."/>
            <person name="Aparicio A."/>
            <person name="Barrell B.G."/>
            <person name="Badcock K."/>
            <person name="Benes V."/>
            <person name="Botstein D."/>
            <person name="Bowman S."/>
            <person name="Brueckner M."/>
            <person name="Carpenter J."/>
            <person name="Cherry J.M."/>
            <person name="Chung E."/>
            <person name="Churcher C.M."/>
            <person name="Coster F."/>
            <person name="Davis K."/>
            <person name="Davis R.W."/>
            <person name="Dietrich F.S."/>
            <person name="Delius H."/>
            <person name="DiPaolo T."/>
            <person name="Dubois E."/>
            <person name="Duesterhoeft A."/>
            <person name="Duncan M."/>
            <person name="Floeth M."/>
            <person name="Fortin N."/>
            <person name="Friesen J.D."/>
            <person name="Fritz C."/>
            <person name="Goffeau A."/>
            <person name="Hall J."/>
            <person name="Hebling U."/>
            <person name="Heumann K."/>
            <person name="Hilbert H."/>
            <person name="Hillier L.W."/>
            <person name="Hunicke-Smith S."/>
            <person name="Hyman R.W."/>
            <person name="Johnston M."/>
            <person name="Kalman S."/>
            <person name="Kleine K."/>
            <person name="Komp C."/>
            <person name="Kurdi O."/>
            <person name="Lashkari D."/>
            <person name="Lew H."/>
            <person name="Lin A."/>
            <person name="Lin D."/>
            <person name="Louis E.J."/>
            <person name="Marathe R."/>
            <person name="Messenguy F."/>
            <person name="Mewes H.-W."/>
            <person name="Mirtipati S."/>
            <person name="Moestl D."/>
            <person name="Mueller-Auer S."/>
            <person name="Namath A."/>
            <person name="Nentwich U."/>
            <person name="Oefner P."/>
            <person name="Pearson D."/>
            <person name="Petel F.X."/>
            <person name="Pohl T.M."/>
            <person name="Purnelle B."/>
            <person name="Rajandream M.A."/>
            <person name="Rechmann S."/>
            <person name="Rieger M."/>
            <person name="Riles L."/>
            <person name="Roberts D."/>
            <person name="Schaefer M."/>
            <person name="Scharfe M."/>
            <person name="Scherens B."/>
            <person name="Schramm S."/>
            <person name="Schroeder M."/>
            <person name="Sdicu A.-M."/>
            <person name="Tettelin H."/>
            <person name="Urrestarazu L.A."/>
            <person name="Ushinsky S."/>
            <person name="Vierendeels F."/>
            <person name="Vissers S."/>
            <person name="Voss H."/>
            <person name="Walsh S.V."/>
            <person name="Wambutt R."/>
            <person name="Wang Y."/>
            <person name="Wedler E."/>
            <person name="Wedler H."/>
            <person name="Winnett E."/>
            <person name="Zhong W.-W."/>
            <person name="Zollner A."/>
            <person name="Vo D.H."/>
            <person name="Hani J."/>
        </authorList>
    </citation>
    <scope>NUCLEOTIDE SEQUENCE [LARGE SCALE GENOMIC DNA]</scope>
    <source>
        <strain>ATCC 204508 / S288c</strain>
    </source>
</reference>
<reference key="2">
    <citation type="journal article" date="2014" name="G3 (Bethesda)">
        <title>The reference genome sequence of Saccharomyces cerevisiae: Then and now.</title>
        <authorList>
            <person name="Engel S.R."/>
            <person name="Dietrich F.S."/>
            <person name="Fisk D.G."/>
            <person name="Binkley G."/>
            <person name="Balakrishnan R."/>
            <person name="Costanzo M.C."/>
            <person name="Dwight S.S."/>
            <person name="Hitz B.C."/>
            <person name="Karra K."/>
            <person name="Nash R.S."/>
            <person name="Weng S."/>
            <person name="Wong E.D."/>
            <person name="Lloyd P."/>
            <person name="Skrzypek M.S."/>
            <person name="Miyasato S.R."/>
            <person name="Simison M."/>
            <person name="Cherry J.M."/>
        </authorList>
    </citation>
    <scope>GENOME REANNOTATION</scope>
    <source>
        <strain>ATCC 204508 / S288c</strain>
    </source>
</reference>
<reference key="3">
    <citation type="journal article" date="1999" name="Proc. Natl. Acad. Sci. U.S.A.">
        <title>Yeast and human genes that affect the Escherichia coli SOS response.</title>
        <authorList>
            <person name="Perkins E.L."/>
            <person name="Sterling J.F."/>
            <person name="Hashem V.I."/>
            <person name="Resnick M.A."/>
        </authorList>
    </citation>
    <scope>FUNCTION</scope>
</reference>
<reference key="4">
    <citation type="journal article" date="2007" name="Mol. Cell. Biol.">
        <title>Role of transcription factor Kar4 in regulating downstream events in the Saccharomyces cerevisiae pheromone response pathway.</title>
        <authorList>
            <person name="Lahav R."/>
            <person name="Gammie A."/>
            <person name="Tavazoie S."/>
            <person name="Rose M.D."/>
        </authorList>
    </citation>
    <scope>INDUCTION</scope>
</reference>
<reference key="5">
    <citation type="journal article" date="2008" name="J. Microbiol.">
        <title>The mutation of a novel Saccharomyces cerevisiae SRL4 gene rescues the lethality of rad53 and lcd1 mutations by modulating dNTP levels.</title>
        <authorList>
            <person name="Choi D.H."/>
            <person name="Oh Y.M."/>
            <person name="Kwon S.H."/>
            <person name="Bae S.H."/>
        </authorList>
    </citation>
    <scope>DISRUPTION PHENOTYPE</scope>
</reference>
<feature type="chain" id="PRO_0000269762" description="Oxidoreductase-like protein SRL4">
    <location>
        <begin position="1"/>
        <end position="281"/>
    </location>
</feature>
<feature type="active site" description="Lowers pKa of active site Tyr" evidence="2">
    <location>
        <position position="197"/>
    </location>
</feature>
<feature type="binding site" evidence="1">
    <location>
        <position position="39"/>
    </location>
    <ligand>
        <name>NADP(+)</name>
        <dbReference type="ChEBI" id="CHEBI:58349"/>
    </ligand>
</feature>
<feature type="binding site" evidence="1">
    <location>
        <position position="60"/>
    </location>
    <ligand>
        <name>NADP(+)</name>
        <dbReference type="ChEBI" id="CHEBI:58349"/>
    </ligand>
</feature>
<feature type="binding site" evidence="1">
    <location>
        <position position="67"/>
    </location>
    <ligand>
        <name>NADP(+)</name>
        <dbReference type="ChEBI" id="CHEBI:58349"/>
    </ligand>
</feature>
<feature type="binding site" evidence="1">
    <location>
        <position position="152"/>
    </location>
    <ligand>
        <name>NADP(+)</name>
        <dbReference type="ChEBI" id="CHEBI:58349"/>
    </ligand>
</feature>
<feature type="binding site" evidence="2">
    <location>
        <position position="197"/>
    </location>
    <ligand>
        <name>NADP(+)</name>
        <dbReference type="ChEBI" id="CHEBI:58349"/>
    </ligand>
</feature>
<sequence>MKKTIYKVLVSFYQYVGLGKKFHPSHDTVLIIGGSSNELGIELCETFIEDYHTKVINIDTIDSINGKNARRSEKLYTFISCKDFSDIKCLEESMLYLQNLEIIPTVLINNMQEGIESTLLKEDKFLRLDEESLNEFEKIVRYNLQSVILITKFCLSNIFPKVQAEAQEKAKGFYIVNISSVLTLKPCKSGTHFITSKCGINSFHDGITSELKLKDSNLNVKTLIAYLPSFESEAHWKRLSPSISKHLVHCLLEGRYGDTILESKRSIGDILLITGFKSSFT</sequence>
<comment type="function">
    <text evidence="3">May be involved in the regulation of dNTP production. Induces the SOS system when expressed in E.coli, therefore, it may play a role in DNA metabolism and/or in genome stability.</text>
</comment>
<comment type="induction">
    <text evidence="4">Expression is induced by the KAR4 transcription factor.</text>
</comment>
<comment type="disruption phenotype">
    <text evidence="5">Suppresses the lethality of LCD1 and RAD53 mutations. Leads to resistance to the chemicals that inhibit nucleotide metabolism and increases dNTP levels in the presence of hydroxyurea.</text>
</comment>
<comment type="similarity">
    <text evidence="6">Belongs to the short-chain dehydrogenases/reductases (SDR) family.</text>
</comment>
<comment type="caution">
    <text evidence="6">Related to oxidoreductases, but misses the conserved Thr active site. Therefore it may not have any oxidoreductase activity.</text>
</comment>
<name>SRL4_YEAST</name>
<gene>
    <name type="primary">SRL4</name>
    <name type="ordered locus">YPL033C</name>
</gene>
<proteinExistence type="evidence at transcript level"/>
<evidence type="ECO:0000250" key="1">
    <source>
        <dbReference type="UniProtKB" id="L0E2Z4"/>
    </source>
</evidence>
<evidence type="ECO:0000250" key="2">
    <source>
        <dbReference type="UniProtKB" id="O93868"/>
    </source>
</evidence>
<evidence type="ECO:0000269" key="3">
    <source>
    </source>
</evidence>
<evidence type="ECO:0000269" key="4">
    <source>
    </source>
</evidence>
<evidence type="ECO:0000269" key="5">
    <source>
    </source>
</evidence>
<evidence type="ECO:0000305" key="6"/>
<accession>Q03085</accession>
<accession>D6W3Y0</accession>
<organism>
    <name type="scientific">Saccharomyces cerevisiae (strain ATCC 204508 / S288c)</name>
    <name type="common">Baker's yeast</name>
    <dbReference type="NCBI Taxonomy" id="559292"/>
    <lineage>
        <taxon>Eukaryota</taxon>
        <taxon>Fungi</taxon>
        <taxon>Dikarya</taxon>
        <taxon>Ascomycota</taxon>
        <taxon>Saccharomycotina</taxon>
        <taxon>Saccharomycetes</taxon>
        <taxon>Saccharomycetales</taxon>
        <taxon>Saccharomycetaceae</taxon>
        <taxon>Saccharomyces</taxon>
    </lineage>
</organism>
<dbReference type="EMBL" id="U44030">
    <property type="protein sequence ID" value="AAB68186.1"/>
    <property type="molecule type" value="Genomic_DNA"/>
</dbReference>
<dbReference type="EMBL" id="BK006949">
    <property type="protein sequence ID" value="DAA11396.1"/>
    <property type="molecule type" value="Genomic_DNA"/>
</dbReference>
<dbReference type="PIR" id="S62041">
    <property type="entry name" value="S62041"/>
</dbReference>
<dbReference type="RefSeq" id="NP_015292.1">
    <property type="nucleotide sequence ID" value="NM_001183847.1"/>
</dbReference>
<dbReference type="SMR" id="Q03085"/>
<dbReference type="BioGRID" id="36145">
    <property type="interactions" value="49"/>
</dbReference>
<dbReference type="FunCoup" id="Q03085">
    <property type="interactions" value="48"/>
</dbReference>
<dbReference type="IntAct" id="Q03085">
    <property type="interactions" value="1"/>
</dbReference>
<dbReference type="STRING" id="4932.YPL033C"/>
<dbReference type="iPTMnet" id="Q03085"/>
<dbReference type="PaxDb" id="4932-YPL033C"/>
<dbReference type="PeptideAtlas" id="Q03085"/>
<dbReference type="EnsemblFungi" id="YPL033C_mRNA">
    <property type="protein sequence ID" value="YPL033C"/>
    <property type="gene ID" value="YPL033C"/>
</dbReference>
<dbReference type="GeneID" id="856074"/>
<dbReference type="KEGG" id="sce:YPL033C"/>
<dbReference type="AGR" id="SGD:S000005954"/>
<dbReference type="SGD" id="S000005954">
    <property type="gene designation" value="SRL4"/>
</dbReference>
<dbReference type="VEuPathDB" id="FungiDB:YPL033C"/>
<dbReference type="eggNOG" id="ENOG502S2NP">
    <property type="taxonomic scope" value="Eukaryota"/>
</dbReference>
<dbReference type="HOGENOM" id="CLU_064112_0_0_1"/>
<dbReference type="InParanoid" id="Q03085"/>
<dbReference type="OMA" id="RAYEPWW"/>
<dbReference type="OrthoDB" id="10253736at2759"/>
<dbReference type="BioCyc" id="YEAST:G3O-33948-MONOMER"/>
<dbReference type="Reactome" id="R-SCE-193144">
    <property type="pathway name" value="Estrogen biosynthesis"/>
</dbReference>
<dbReference type="Reactome" id="R-SCE-2187335">
    <property type="pathway name" value="The retinoid cycle in cones (daylight vision)"/>
</dbReference>
<dbReference type="Reactome" id="R-SCE-5365859">
    <property type="pathway name" value="RA biosynthesis pathway"/>
</dbReference>
<dbReference type="Reactome" id="R-SCE-8964572">
    <property type="pathway name" value="Lipid particle organization"/>
</dbReference>
<dbReference type="BioGRID-ORCS" id="856074">
    <property type="hits" value="0 hits in 10 CRISPR screens"/>
</dbReference>
<dbReference type="PRO" id="PR:Q03085"/>
<dbReference type="Proteomes" id="UP000002311">
    <property type="component" value="Chromosome XVI"/>
</dbReference>
<dbReference type="RNAct" id="Q03085">
    <property type="molecule type" value="protein"/>
</dbReference>
<dbReference type="GO" id="GO:0005739">
    <property type="term" value="C:mitochondrion"/>
    <property type="evidence" value="ECO:0007005"/>
    <property type="project" value="SGD"/>
</dbReference>
<dbReference type="GO" id="GO:0016616">
    <property type="term" value="F:oxidoreductase activity, acting on the CH-OH group of donors, NAD or NADP as acceptor"/>
    <property type="evidence" value="ECO:0000318"/>
    <property type="project" value="GO_Central"/>
</dbReference>
<dbReference type="GO" id="GO:0009200">
    <property type="term" value="P:deoxyribonucleoside triphosphate metabolic process"/>
    <property type="evidence" value="ECO:0000315"/>
    <property type="project" value="SGD"/>
</dbReference>
<dbReference type="FunFam" id="3.40.50.720:FF:000765">
    <property type="entry name" value="YPL033C-like protein"/>
    <property type="match status" value="1"/>
</dbReference>
<dbReference type="Gene3D" id="3.40.50.720">
    <property type="entry name" value="NAD(P)-binding Rossmann-like Domain"/>
    <property type="match status" value="1"/>
</dbReference>
<dbReference type="InterPro" id="IPR036291">
    <property type="entry name" value="NAD(P)-bd_dom_sf"/>
</dbReference>
<dbReference type="InterPro" id="IPR002347">
    <property type="entry name" value="SDR_fam"/>
</dbReference>
<dbReference type="PANTHER" id="PTHR24322:SF744">
    <property type="entry name" value="OXIDOREDUCTASE-LIKE PROTEIN SRL4"/>
    <property type="match status" value="1"/>
</dbReference>
<dbReference type="PANTHER" id="PTHR24322">
    <property type="entry name" value="PKSB"/>
    <property type="match status" value="1"/>
</dbReference>
<dbReference type="Pfam" id="PF00106">
    <property type="entry name" value="adh_short"/>
    <property type="match status" value="1"/>
</dbReference>
<dbReference type="SUPFAM" id="SSF51735">
    <property type="entry name" value="NAD(P)-binding Rossmann-fold domains"/>
    <property type="match status" value="1"/>
</dbReference>
<protein>
    <recommendedName>
        <fullName>Oxidoreductase-like protein SRL4</fullName>
    </recommendedName>
    <alternativeName>
        <fullName>Suppressor of RAD53 and LCD1 4</fullName>
    </alternativeName>
    <alternativeName>
        <fullName>Suppressor of RAD53 null lethality 4</fullName>
    </alternativeName>
</protein>